<protein>
    <recommendedName>
        <fullName evidence="1">Small ribosomal subunit protein bS6</fullName>
    </recommendedName>
    <alternativeName>
        <fullName evidence="2">30S ribosomal protein S6</fullName>
    </alternativeName>
</protein>
<gene>
    <name evidence="1" type="primary">rpsF</name>
    <name type="ordered locus">ABC4107</name>
</gene>
<sequence>MRKYEIMYIIAPNLEESANKEIIERYNKVLTDNGAEILKVDEIGKKRLAYEINDFKDGFYVLLSVQANTEAINEFNRLIKINDNVIRVLVTKDEQ</sequence>
<keyword id="KW-1185">Reference proteome</keyword>
<keyword id="KW-0687">Ribonucleoprotein</keyword>
<keyword id="KW-0689">Ribosomal protein</keyword>
<keyword id="KW-0694">RNA-binding</keyword>
<keyword id="KW-0699">rRNA-binding</keyword>
<accession>Q5WAH3</accession>
<proteinExistence type="inferred from homology"/>
<dbReference type="EMBL" id="AP006627">
    <property type="protein sequence ID" value="BAD66638.1"/>
    <property type="molecule type" value="Genomic_DNA"/>
</dbReference>
<dbReference type="RefSeq" id="WP_011248940.1">
    <property type="nucleotide sequence ID" value="NC_006582.1"/>
</dbReference>
<dbReference type="SMR" id="Q5WAH3"/>
<dbReference type="STRING" id="66692.ABC4107"/>
<dbReference type="GeneID" id="86928445"/>
<dbReference type="KEGG" id="bcl:ABC4107"/>
<dbReference type="eggNOG" id="COG0360">
    <property type="taxonomic scope" value="Bacteria"/>
</dbReference>
<dbReference type="HOGENOM" id="CLU_113441_5_3_9"/>
<dbReference type="OrthoDB" id="9812702at2"/>
<dbReference type="Proteomes" id="UP000001168">
    <property type="component" value="Chromosome"/>
</dbReference>
<dbReference type="GO" id="GO:0005737">
    <property type="term" value="C:cytoplasm"/>
    <property type="evidence" value="ECO:0007669"/>
    <property type="project" value="UniProtKB-ARBA"/>
</dbReference>
<dbReference type="GO" id="GO:1990904">
    <property type="term" value="C:ribonucleoprotein complex"/>
    <property type="evidence" value="ECO:0007669"/>
    <property type="project" value="UniProtKB-KW"/>
</dbReference>
<dbReference type="GO" id="GO:0005840">
    <property type="term" value="C:ribosome"/>
    <property type="evidence" value="ECO:0007669"/>
    <property type="project" value="UniProtKB-KW"/>
</dbReference>
<dbReference type="GO" id="GO:0070181">
    <property type="term" value="F:small ribosomal subunit rRNA binding"/>
    <property type="evidence" value="ECO:0007669"/>
    <property type="project" value="TreeGrafter"/>
</dbReference>
<dbReference type="GO" id="GO:0003735">
    <property type="term" value="F:structural constituent of ribosome"/>
    <property type="evidence" value="ECO:0007669"/>
    <property type="project" value="InterPro"/>
</dbReference>
<dbReference type="GO" id="GO:0006412">
    <property type="term" value="P:translation"/>
    <property type="evidence" value="ECO:0007669"/>
    <property type="project" value="UniProtKB-UniRule"/>
</dbReference>
<dbReference type="CDD" id="cd00473">
    <property type="entry name" value="bS6"/>
    <property type="match status" value="1"/>
</dbReference>
<dbReference type="FunFam" id="3.30.70.60:FF:000002">
    <property type="entry name" value="30S ribosomal protein S6"/>
    <property type="match status" value="1"/>
</dbReference>
<dbReference type="Gene3D" id="3.30.70.60">
    <property type="match status" value="1"/>
</dbReference>
<dbReference type="HAMAP" id="MF_00360">
    <property type="entry name" value="Ribosomal_bS6"/>
    <property type="match status" value="1"/>
</dbReference>
<dbReference type="InterPro" id="IPR000529">
    <property type="entry name" value="Ribosomal_bS6"/>
</dbReference>
<dbReference type="InterPro" id="IPR020815">
    <property type="entry name" value="Ribosomal_bS6_CS"/>
</dbReference>
<dbReference type="InterPro" id="IPR035980">
    <property type="entry name" value="Ribosomal_bS6_sf"/>
</dbReference>
<dbReference type="InterPro" id="IPR020814">
    <property type="entry name" value="Ribosomal_S6_plastid/chlpt"/>
</dbReference>
<dbReference type="InterPro" id="IPR014717">
    <property type="entry name" value="Transl_elong_EF1B/ribsomal_bS6"/>
</dbReference>
<dbReference type="NCBIfam" id="TIGR00166">
    <property type="entry name" value="S6"/>
    <property type="match status" value="1"/>
</dbReference>
<dbReference type="PANTHER" id="PTHR21011">
    <property type="entry name" value="MITOCHONDRIAL 28S RIBOSOMAL PROTEIN S6"/>
    <property type="match status" value="1"/>
</dbReference>
<dbReference type="PANTHER" id="PTHR21011:SF1">
    <property type="entry name" value="SMALL RIBOSOMAL SUBUNIT PROTEIN BS6M"/>
    <property type="match status" value="1"/>
</dbReference>
<dbReference type="Pfam" id="PF01250">
    <property type="entry name" value="Ribosomal_S6"/>
    <property type="match status" value="1"/>
</dbReference>
<dbReference type="SUPFAM" id="SSF54995">
    <property type="entry name" value="Ribosomal protein S6"/>
    <property type="match status" value="1"/>
</dbReference>
<dbReference type="PROSITE" id="PS01048">
    <property type="entry name" value="RIBOSOMAL_S6"/>
    <property type="match status" value="1"/>
</dbReference>
<name>RS6_SHOC1</name>
<reference key="1">
    <citation type="submission" date="2003-10" db="EMBL/GenBank/DDBJ databases">
        <title>The complete genome sequence of the alkaliphilic Bacillus clausii KSM-K16.</title>
        <authorList>
            <person name="Takaki Y."/>
            <person name="Kageyama Y."/>
            <person name="Shimamura S."/>
            <person name="Suzuki H."/>
            <person name="Nishi S."/>
            <person name="Hatada Y."/>
            <person name="Kawai S."/>
            <person name="Ito S."/>
            <person name="Horikoshi K."/>
        </authorList>
    </citation>
    <scope>NUCLEOTIDE SEQUENCE [LARGE SCALE GENOMIC DNA]</scope>
    <source>
        <strain>KSM-K16</strain>
    </source>
</reference>
<comment type="function">
    <text evidence="1">Binds together with bS18 to 16S ribosomal RNA.</text>
</comment>
<comment type="similarity">
    <text evidence="1">Belongs to the bacterial ribosomal protein bS6 family.</text>
</comment>
<evidence type="ECO:0000255" key="1">
    <source>
        <dbReference type="HAMAP-Rule" id="MF_00360"/>
    </source>
</evidence>
<evidence type="ECO:0000305" key="2"/>
<organism>
    <name type="scientific">Shouchella clausii (strain KSM-K16)</name>
    <name type="common">Alkalihalobacillus clausii</name>
    <dbReference type="NCBI Taxonomy" id="66692"/>
    <lineage>
        <taxon>Bacteria</taxon>
        <taxon>Bacillati</taxon>
        <taxon>Bacillota</taxon>
        <taxon>Bacilli</taxon>
        <taxon>Bacillales</taxon>
        <taxon>Bacillaceae</taxon>
        <taxon>Shouchella</taxon>
    </lineage>
</organism>
<feature type="chain" id="PRO_0000176724" description="Small ribosomal subunit protein bS6">
    <location>
        <begin position="1"/>
        <end position="95"/>
    </location>
</feature>